<organism>
    <name type="scientific">Lacticaseibacillus casei (strain BL23)</name>
    <name type="common">Lactobacillus casei</name>
    <dbReference type="NCBI Taxonomy" id="543734"/>
    <lineage>
        <taxon>Bacteria</taxon>
        <taxon>Bacillati</taxon>
        <taxon>Bacillota</taxon>
        <taxon>Bacilli</taxon>
        <taxon>Lactobacillales</taxon>
        <taxon>Lactobacillaceae</taxon>
        <taxon>Lacticaseibacillus</taxon>
    </lineage>
</organism>
<accession>B3WCP4</accession>
<name>HPRK_LACCB</name>
<protein>
    <recommendedName>
        <fullName evidence="1">HPr kinase/phosphorylase</fullName>
        <shortName evidence="1">HPrK/P</shortName>
        <ecNumber evidence="1">2.7.11.-</ecNumber>
        <ecNumber evidence="1">2.7.4.-</ecNumber>
    </recommendedName>
    <alternativeName>
        <fullName evidence="1">HPr(Ser) kinase/phosphorylase</fullName>
    </alternativeName>
</protein>
<proteinExistence type="inferred from homology"/>
<reference key="1">
    <citation type="submission" date="2008-06" db="EMBL/GenBank/DDBJ databases">
        <title>Lactobacillus casei BL23 complete genome sequence.</title>
        <authorList>
            <person name="Maze A."/>
            <person name="Boel G."/>
            <person name="Bourand A."/>
            <person name="Loux V."/>
            <person name="Gibrat J.F."/>
            <person name="Zuniga M."/>
            <person name="Hartke A."/>
            <person name="Deutscher J."/>
        </authorList>
    </citation>
    <scope>NUCLEOTIDE SEQUENCE [LARGE SCALE GENOMIC DNA]</scope>
    <source>
        <strain>BL23</strain>
    </source>
</reference>
<comment type="function">
    <text evidence="1">Catalyzes the ATP- as well as the pyrophosphate-dependent phosphorylation of a specific serine residue in HPr, a phosphocarrier protein of the phosphoenolpyruvate-dependent sugar phosphotransferase system (PTS). HprK/P also catalyzes the pyrophosphate-producing, inorganic phosphate-dependent dephosphorylation (phosphorolysis) of seryl-phosphorylated HPr (P-Ser-HPr). The two antagonistic activities of HprK/P are regulated by several intracellular metabolites, which change their concentration in response to the absence or presence of rapidly metabolisable carbon sources (glucose, fructose, etc.) in the growth medium. Therefore, by controlling the phosphorylation state of HPr, HPrK/P is a sensor enzyme that plays a major role in the regulation of carbon metabolism and sugar transport: it mediates carbon catabolite repression (CCR), and regulates PTS-catalyzed carbohydrate uptake and inducer exclusion.</text>
</comment>
<comment type="catalytic activity">
    <reaction evidence="1">
        <text>[HPr protein]-L-serine + ATP = [HPr protein]-O-phospho-L-serine + ADP + H(+)</text>
        <dbReference type="Rhea" id="RHEA:46600"/>
        <dbReference type="Rhea" id="RHEA-COMP:11602"/>
        <dbReference type="Rhea" id="RHEA-COMP:11603"/>
        <dbReference type="ChEBI" id="CHEBI:15378"/>
        <dbReference type="ChEBI" id="CHEBI:29999"/>
        <dbReference type="ChEBI" id="CHEBI:30616"/>
        <dbReference type="ChEBI" id="CHEBI:83421"/>
        <dbReference type="ChEBI" id="CHEBI:456216"/>
    </reaction>
</comment>
<comment type="catalytic activity">
    <reaction evidence="1">
        <text>[HPr protein]-O-phospho-L-serine + phosphate + H(+) = [HPr protein]-L-serine + diphosphate</text>
        <dbReference type="Rhea" id="RHEA:46604"/>
        <dbReference type="Rhea" id="RHEA-COMP:11602"/>
        <dbReference type="Rhea" id="RHEA-COMP:11603"/>
        <dbReference type="ChEBI" id="CHEBI:15378"/>
        <dbReference type="ChEBI" id="CHEBI:29999"/>
        <dbReference type="ChEBI" id="CHEBI:33019"/>
        <dbReference type="ChEBI" id="CHEBI:43474"/>
        <dbReference type="ChEBI" id="CHEBI:83421"/>
    </reaction>
</comment>
<comment type="cofactor">
    <cofactor evidence="1">
        <name>Mg(2+)</name>
        <dbReference type="ChEBI" id="CHEBI:18420"/>
    </cofactor>
</comment>
<comment type="subunit">
    <text evidence="1">Homohexamer.</text>
</comment>
<comment type="domain">
    <text evidence="1">The Walker A ATP-binding motif also binds Pi and PPi.</text>
</comment>
<comment type="miscellaneous">
    <text evidence="1">Both phosphorylation and phosphorolysis are carried out by the same active site and suggest a common mechanism for both reactions.</text>
</comment>
<comment type="similarity">
    <text evidence="1">Belongs to the HPrK/P family.</text>
</comment>
<evidence type="ECO:0000255" key="1">
    <source>
        <dbReference type="HAMAP-Rule" id="MF_01249"/>
    </source>
</evidence>
<sequence>MADSVTVRQLVKATKLEVYSGEEYLDQRQVVLSDISRPGLELTGYFNYYPHERIQLFGRTEISFARNMSSEERLLILKRMATEDTPAFLVSRGLEAPAEMITAATAAHIPVLGSRLPTTRLSSLITEYLDSQLAERRSMHGVLVDIYGLGVLITGDSGVGKSETALELVQRGHRLIADDRVDVYQQDEQTIVGAAPPILSHLLEIRGLGIIDVMNLFGAGAVREDTTISLIVHLENWTPDKTFDRLGSGEQTQLIFDVPVPKITVPVKVGRNLAIIIEVAAMNFRAKSMGYDATKTFEKNLNHLIEHNEETDQNSSGDK</sequence>
<feature type="chain" id="PRO_1000139901" description="HPr kinase/phosphorylase">
    <location>
        <begin position="1"/>
        <end position="319"/>
    </location>
</feature>
<feature type="region of interest" description="Important for the catalytic mechanism of both phosphorylation and dephosphorylation" evidence="1">
    <location>
        <begin position="203"/>
        <end position="212"/>
    </location>
</feature>
<feature type="region of interest" description="Important for the catalytic mechanism of dephosphorylation" evidence="1">
    <location>
        <begin position="266"/>
        <end position="271"/>
    </location>
</feature>
<feature type="active site" evidence="1">
    <location>
        <position position="140"/>
    </location>
</feature>
<feature type="active site" evidence="1">
    <location>
        <position position="161"/>
    </location>
</feature>
<feature type="active site" description="Proton acceptor; for phosphorylation activity. Proton donor; for dephosphorylation activity" evidence="1">
    <location>
        <position position="179"/>
    </location>
</feature>
<feature type="active site" evidence="1">
    <location>
        <position position="245"/>
    </location>
</feature>
<feature type="binding site" evidence="1">
    <location>
        <begin position="155"/>
        <end position="162"/>
    </location>
    <ligand>
        <name>ATP</name>
        <dbReference type="ChEBI" id="CHEBI:30616"/>
    </ligand>
</feature>
<feature type="binding site" evidence="1">
    <location>
        <position position="162"/>
    </location>
    <ligand>
        <name>Mg(2+)</name>
        <dbReference type="ChEBI" id="CHEBI:18420"/>
    </ligand>
</feature>
<feature type="binding site" evidence="1">
    <location>
        <position position="204"/>
    </location>
    <ligand>
        <name>Mg(2+)</name>
        <dbReference type="ChEBI" id="CHEBI:18420"/>
    </ligand>
</feature>
<keyword id="KW-0067">ATP-binding</keyword>
<keyword id="KW-0119">Carbohydrate metabolism</keyword>
<keyword id="KW-0418">Kinase</keyword>
<keyword id="KW-0460">Magnesium</keyword>
<keyword id="KW-0479">Metal-binding</keyword>
<keyword id="KW-0511">Multifunctional enzyme</keyword>
<keyword id="KW-0547">Nucleotide-binding</keyword>
<keyword id="KW-0723">Serine/threonine-protein kinase</keyword>
<keyword id="KW-0808">Transferase</keyword>
<dbReference type="EC" id="2.7.11.-" evidence="1"/>
<dbReference type="EC" id="2.7.4.-" evidence="1"/>
<dbReference type="EMBL" id="FM177140">
    <property type="protein sequence ID" value="CAQ66145.1"/>
    <property type="molecule type" value="Genomic_DNA"/>
</dbReference>
<dbReference type="SMR" id="B3WCP4"/>
<dbReference type="KEGG" id="lcb:LCABL_10590"/>
<dbReference type="HOGENOM" id="CLU_052030_0_1_9"/>
<dbReference type="GO" id="GO:0005524">
    <property type="term" value="F:ATP binding"/>
    <property type="evidence" value="ECO:0007669"/>
    <property type="project" value="UniProtKB-UniRule"/>
</dbReference>
<dbReference type="GO" id="GO:0000287">
    <property type="term" value="F:magnesium ion binding"/>
    <property type="evidence" value="ECO:0007669"/>
    <property type="project" value="UniProtKB-UniRule"/>
</dbReference>
<dbReference type="GO" id="GO:0000155">
    <property type="term" value="F:phosphorelay sensor kinase activity"/>
    <property type="evidence" value="ECO:0007669"/>
    <property type="project" value="InterPro"/>
</dbReference>
<dbReference type="GO" id="GO:0004674">
    <property type="term" value="F:protein serine/threonine kinase activity"/>
    <property type="evidence" value="ECO:0007669"/>
    <property type="project" value="UniProtKB-KW"/>
</dbReference>
<dbReference type="GO" id="GO:0004712">
    <property type="term" value="F:protein serine/threonine/tyrosine kinase activity"/>
    <property type="evidence" value="ECO:0007669"/>
    <property type="project" value="UniProtKB-UniRule"/>
</dbReference>
<dbReference type="GO" id="GO:0006109">
    <property type="term" value="P:regulation of carbohydrate metabolic process"/>
    <property type="evidence" value="ECO:0007669"/>
    <property type="project" value="UniProtKB-UniRule"/>
</dbReference>
<dbReference type="CDD" id="cd01918">
    <property type="entry name" value="HprK_C"/>
    <property type="match status" value="1"/>
</dbReference>
<dbReference type="FunFam" id="3.40.50.300:FF:000174">
    <property type="entry name" value="HPr kinase/phosphorylase"/>
    <property type="match status" value="1"/>
</dbReference>
<dbReference type="Gene3D" id="3.40.1390.20">
    <property type="entry name" value="HprK N-terminal domain-like"/>
    <property type="match status" value="1"/>
</dbReference>
<dbReference type="Gene3D" id="3.40.50.300">
    <property type="entry name" value="P-loop containing nucleotide triphosphate hydrolases"/>
    <property type="match status" value="1"/>
</dbReference>
<dbReference type="HAMAP" id="MF_01249">
    <property type="entry name" value="HPr_kinase"/>
    <property type="match status" value="1"/>
</dbReference>
<dbReference type="InterPro" id="IPR003755">
    <property type="entry name" value="HPr(Ser)_kin/Pase"/>
</dbReference>
<dbReference type="InterPro" id="IPR011104">
    <property type="entry name" value="Hpr_kin/Pase_C"/>
</dbReference>
<dbReference type="InterPro" id="IPR011126">
    <property type="entry name" value="Hpr_kin/Pase_Hpr_N"/>
</dbReference>
<dbReference type="InterPro" id="IPR027417">
    <property type="entry name" value="P-loop_NTPase"/>
</dbReference>
<dbReference type="InterPro" id="IPR028979">
    <property type="entry name" value="Ser_kin/Pase_Hpr-like_N_sf"/>
</dbReference>
<dbReference type="NCBIfam" id="TIGR00679">
    <property type="entry name" value="hpr-ser"/>
    <property type="match status" value="1"/>
</dbReference>
<dbReference type="PANTHER" id="PTHR30305:SF1">
    <property type="entry name" value="HPR KINASE_PHOSPHORYLASE"/>
    <property type="match status" value="1"/>
</dbReference>
<dbReference type="PANTHER" id="PTHR30305">
    <property type="entry name" value="PROTEIN YJDM-RELATED"/>
    <property type="match status" value="1"/>
</dbReference>
<dbReference type="Pfam" id="PF07475">
    <property type="entry name" value="Hpr_kinase_C"/>
    <property type="match status" value="1"/>
</dbReference>
<dbReference type="Pfam" id="PF02603">
    <property type="entry name" value="Hpr_kinase_N"/>
    <property type="match status" value="1"/>
</dbReference>
<dbReference type="SUPFAM" id="SSF75138">
    <property type="entry name" value="HprK N-terminal domain-like"/>
    <property type="match status" value="1"/>
</dbReference>
<dbReference type="SUPFAM" id="SSF53795">
    <property type="entry name" value="PEP carboxykinase-like"/>
    <property type="match status" value="1"/>
</dbReference>
<gene>
    <name evidence="1" type="primary">hprK</name>
    <name type="ordered locus">LCABL_10590</name>
</gene>